<feature type="chain" id="PRO_0000351990" description="Small ribosomal subunit protein uS2">
    <location>
        <begin position="1"/>
        <end position="241"/>
    </location>
</feature>
<name>RS2_ECOUT</name>
<organism>
    <name type="scientific">Escherichia coli (strain UTI89 / UPEC)</name>
    <dbReference type="NCBI Taxonomy" id="364106"/>
    <lineage>
        <taxon>Bacteria</taxon>
        <taxon>Pseudomonadati</taxon>
        <taxon>Pseudomonadota</taxon>
        <taxon>Gammaproteobacteria</taxon>
        <taxon>Enterobacterales</taxon>
        <taxon>Enterobacteriaceae</taxon>
        <taxon>Escherichia</taxon>
    </lineage>
</organism>
<gene>
    <name evidence="1" type="primary">rpsB</name>
    <name type="ordered locus">UTI89_C0183</name>
</gene>
<reference key="1">
    <citation type="journal article" date="2006" name="Proc. Natl. Acad. Sci. U.S.A.">
        <title>Identification of genes subject to positive selection in uropathogenic strains of Escherichia coli: a comparative genomics approach.</title>
        <authorList>
            <person name="Chen S.L."/>
            <person name="Hung C.-S."/>
            <person name="Xu J."/>
            <person name="Reigstad C.S."/>
            <person name="Magrini V."/>
            <person name="Sabo A."/>
            <person name="Blasiar D."/>
            <person name="Bieri T."/>
            <person name="Meyer R.R."/>
            <person name="Ozersky P."/>
            <person name="Armstrong J.R."/>
            <person name="Fulton R.S."/>
            <person name="Latreille J.P."/>
            <person name="Spieth J."/>
            <person name="Hooton T.M."/>
            <person name="Mardis E.R."/>
            <person name="Hultgren S.J."/>
            <person name="Gordon J.I."/>
        </authorList>
    </citation>
    <scope>NUCLEOTIDE SEQUENCE [LARGE SCALE GENOMIC DNA]</scope>
    <source>
        <strain>UTI89 / UPEC</strain>
    </source>
</reference>
<sequence length="241" mass="26744">MATVSMRDMLKAGVHFGHQTRYWNPKMKPFIFGARNKVHIINLEKTVPMFNEALAELNKIASRKGKILFVGTKRAASEAVKDAALSCDQFFVNHRWLGGMLTNWKTVRQSIKRLKDLETQSQDGTFDKLTKKEALMRTRELEKLENSLGGIKDMGGLPDALFVIDADHEHIAIKEANNLGIPVFAIVDTNSDPDGVDFVIPGNDDAIRAVTLYLGAVAATVREGRSQDLASQAEESFVEAE</sequence>
<evidence type="ECO:0000255" key="1">
    <source>
        <dbReference type="HAMAP-Rule" id="MF_00291"/>
    </source>
</evidence>
<evidence type="ECO:0000305" key="2"/>
<comment type="similarity">
    <text evidence="1">Belongs to the universal ribosomal protein uS2 family.</text>
</comment>
<comment type="sequence caution" evidence="2">
    <conflict type="erroneous initiation">
        <sequence resource="EMBL-CDS" id="ABE05693"/>
    </conflict>
</comment>
<keyword id="KW-0687">Ribonucleoprotein</keyword>
<keyword id="KW-0689">Ribosomal protein</keyword>
<accession>Q1RG21</accession>
<dbReference type="EMBL" id="CP000243">
    <property type="protein sequence ID" value="ABE05693.1"/>
    <property type="status" value="ALT_INIT"/>
    <property type="molecule type" value="Genomic_DNA"/>
</dbReference>
<dbReference type="RefSeq" id="WP_000246882.1">
    <property type="nucleotide sequence ID" value="NZ_CP064825.1"/>
</dbReference>
<dbReference type="SMR" id="Q1RG21"/>
<dbReference type="GeneID" id="89519558"/>
<dbReference type="KEGG" id="eci:UTI89_C0183"/>
<dbReference type="HOGENOM" id="CLU_040318_1_0_6"/>
<dbReference type="Proteomes" id="UP000001952">
    <property type="component" value="Chromosome"/>
</dbReference>
<dbReference type="GO" id="GO:0022627">
    <property type="term" value="C:cytosolic small ribosomal subunit"/>
    <property type="evidence" value="ECO:0007669"/>
    <property type="project" value="TreeGrafter"/>
</dbReference>
<dbReference type="GO" id="GO:0003735">
    <property type="term" value="F:structural constituent of ribosome"/>
    <property type="evidence" value="ECO:0007669"/>
    <property type="project" value="InterPro"/>
</dbReference>
<dbReference type="GO" id="GO:0006412">
    <property type="term" value="P:translation"/>
    <property type="evidence" value="ECO:0007669"/>
    <property type="project" value="UniProtKB-UniRule"/>
</dbReference>
<dbReference type="CDD" id="cd01425">
    <property type="entry name" value="RPS2"/>
    <property type="match status" value="1"/>
</dbReference>
<dbReference type="FunFam" id="1.10.287.610:FF:000001">
    <property type="entry name" value="30S ribosomal protein S2"/>
    <property type="match status" value="1"/>
</dbReference>
<dbReference type="Gene3D" id="3.40.50.10490">
    <property type="entry name" value="Glucose-6-phosphate isomerase like protein, domain 1"/>
    <property type="match status" value="1"/>
</dbReference>
<dbReference type="Gene3D" id="1.10.287.610">
    <property type="entry name" value="Helix hairpin bin"/>
    <property type="match status" value="1"/>
</dbReference>
<dbReference type="HAMAP" id="MF_00291_B">
    <property type="entry name" value="Ribosomal_uS2_B"/>
    <property type="match status" value="1"/>
</dbReference>
<dbReference type="InterPro" id="IPR001865">
    <property type="entry name" value="Ribosomal_uS2"/>
</dbReference>
<dbReference type="InterPro" id="IPR005706">
    <property type="entry name" value="Ribosomal_uS2_bac/mit/plastid"/>
</dbReference>
<dbReference type="InterPro" id="IPR018130">
    <property type="entry name" value="Ribosomal_uS2_CS"/>
</dbReference>
<dbReference type="InterPro" id="IPR023591">
    <property type="entry name" value="Ribosomal_uS2_flav_dom_sf"/>
</dbReference>
<dbReference type="NCBIfam" id="TIGR01011">
    <property type="entry name" value="rpsB_bact"/>
    <property type="match status" value="1"/>
</dbReference>
<dbReference type="PANTHER" id="PTHR12534">
    <property type="entry name" value="30S RIBOSOMAL PROTEIN S2 PROKARYOTIC AND ORGANELLAR"/>
    <property type="match status" value="1"/>
</dbReference>
<dbReference type="PANTHER" id="PTHR12534:SF0">
    <property type="entry name" value="SMALL RIBOSOMAL SUBUNIT PROTEIN US2M"/>
    <property type="match status" value="1"/>
</dbReference>
<dbReference type="Pfam" id="PF00318">
    <property type="entry name" value="Ribosomal_S2"/>
    <property type="match status" value="1"/>
</dbReference>
<dbReference type="PRINTS" id="PR00395">
    <property type="entry name" value="RIBOSOMALS2"/>
</dbReference>
<dbReference type="SUPFAM" id="SSF52313">
    <property type="entry name" value="Ribosomal protein S2"/>
    <property type="match status" value="1"/>
</dbReference>
<dbReference type="PROSITE" id="PS00962">
    <property type="entry name" value="RIBOSOMAL_S2_1"/>
    <property type="match status" value="1"/>
</dbReference>
<dbReference type="PROSITE" id="PS00963">
    <property type="entry name" value="RIBOSOMAL_S2_2"/>
    <property type="match status" value="1"/>
</dbReference>
<protein>
    <recommendedName>
        <fullName evidence="1">Small ribosomal subunit protein uS2</fullName>
    </recommendedName>
    <alternativeName>
        <fullName evidence="2">30S ribosomal protein S2</fullName>
    </alternativeName>
</protein>
<proteinExistence type="inferred from homology"/>